<feature type="chain" id="PRO_1000213743" description="N-succinylglutamate 5-semialdehyde dehydrogenase">
    <location>
        <begin position="1"/>
        <end position="488"/>
    </location>
</feature>
<feature type="active site" evidence="1">
    <location>
        <position position="244"/>
    </location>
</feature>
<feature type="active site" evidence="1">
    <location>
        <position position="278"/>
    </location>
</feature>
<feature type="binding site" evidence="1">
    <location>
        <begin position="221"/>
        <end position="226"/>
    </location>
    <ligand>
        <name>NAD(+)</name>
        <dbReference type="ChEBI" id="CHEBI:57540"/>
    </ligand>
</feature>
<protein>
    <recommendedName>
        <fullName evidence="1">N-succinylglutamate 5-semialdehyde dehydrogenase</fullName>
        <ecNumber evidence="1">1.2.1.71</ecNumber>
    </recommendedName>
    <alternativeName>
        <fullName evidence="1">Succinylglutamic semialdehyde dehydrogenase</fullName>
        <shortName evidence="1">SGSD</shortName>
    </alternativeName>
</protein>
<comment type="function">
    <text evidence="1">Catalyzes the NAD-dependent reduction of succinylglutamate semialdehyde into succinylglutamate.</text>
</comment>
<comment type="catalytic activity">
    <reaction evidence="1">
        <text>N-succinyl-L-glutamate 5-semialdehyde + NAD(+) + H2O = N-succinyl-L-glutamate + NADH + 2 H(+)</text>
        <dbReference type="Rhea" id="RHEA:10812"/>
        <dbReference type="ChEBI" id="CHEBI:15377"/>
        <dbReference type="ChEBI" id="CHEBI:15378"/>
        <dbReference type="ChEBI" id="CHEBI:57540"/>
        <dbReference type="ChEBI" id="CHEBI:57945"/>
        <dbReference type="ChEBI" id="CHEBI:58520"/>
        <dbReference type="ChEBI" id="CHEBI:58763"/>
        <dbReference type="EC" id="1.2.1.71"/>
    </reaction>
</comment>
<comment type="pathway">
    <text evidence="1">Amino-acid degradation; L-arginine degradation via AST pathway; L-glutamate and succinate from L-arginine: step 4/5.</text>
</comment>
<comment type="similarity">
    <text evidence="1">Belongs to the aldehyde dehydrogenase family. AstD subfamily.</text>
</comment>
<sequence length="488" mass="51512">MNSLYIAGSWLAGQGELFESRNPVTQHVLWAGNGATAEQVESAVQAARQAFPAWARRPLEERISVLETFAATLKNRADEIARCIGEETGKPLWESVTEVTSMANKIAISVQSYRERTGEKSGPLGDATAVLRHKPHGVVAVFGPYNFPGHLPNGHIVPALLAGNTVLFKPSELTPKVAELTVQCWIEAGLPAGVLNLLQGARETGIALAANPGIDGLFFTGSSRTGNHLHQQFSGRPDKILALEMGGNNPLVVDEVADVDAAVYTIIQSAFISAGQRCTCARRLLVPEGAWGDALLARLVAVSATIAVGAFDQQPAPFMGSVISLAAAKALMDAQELMLANGAVALLEMTQPQDQAALLTPGIIDVTGVTAREDEELFGPLLQVIRYADFAAAIAEANNTQYGLAAGLLSDSEARYQQFWLESRAGIVNWNKQLTGAASTAPFGGVGASGNHRASAYYAADYCAYPVASLETPSLVVPATLTPGVRLS</sequence>
<accession>C3JXY7</accession>
<gene>
    <name evidence="1" type="primary">astD</name>
    <name type="ordered locus">PFLU_4754</name>
</gene>
<dbReference type="EC" id="1.2.1.71" evidence="1"/>
<dbReference type="EMBL" id="AM181176">
    <property type="protein sequence ID" value="CAY51578.1"/>
    <property type="molecule type" value="Genomic_DNA"/>
</dbReference>
<dbReference type="RefSeq" id="WP_015885473.1">
    <property type="nucleotide sequence ID" value="NC_012660.1"/>
</dbReference>
<dbReference type="SMR" id="C3JXY7"/>
<dbReference type="STRING" id="294.SRM1_04229"/>
<dbReference type="PATRIC" id="fig|216595.4.peg.4888"/>
<dbReference type="eggNOG" id="COG1012">
    <property type="taxonomic scope" value="Bacteria"/>
</dbReference>
<dbReference type="HOGENOM" id="CLU_005391_1_0_6"/>
<dbReference type="OrthoDB" id="9812625at2"/>
<dbReference type="UniPathway" id="UPA00185">
    <property type="reaction ID" value="UER00282"/>
</dbReference>
<dbReference type="GO" id="GO:0043824">
    <property type="term" value="F:succinylglutamate-semialdehyde dehydrogenase activity"/>
    <property type="evidence" value="ECO:0007669"/>
    <property type="project" value="UniProtKB-EC"/>
</dbReference>
<dbReference type="GO" id="GO:0019544">
    <property type="term" value="P:arginine catabolic process to glutamate"/>
    <property type="evidence" value="ECO:0007669"/>
    <property type="project" value="UniProtKB-UniRule"/>
</dbReference>
<dbReference type="GO" id="GO:0019545">
    <property type="term" value="P:arginine catabolic process to succinate"/>
    <property type="evidence" value="ECO:0007669"/>
    <property type="project" value="UniProtKB-UniRule"/>
</dbReference>
<dbReference type="CDD" id="cd07095">
    <property type="entry name" value="ALDH_SGSD_AstD"/>
    <property type="match status" value="1"/>
</dbReference>
<dbReference type="FunFam" id="3.40.309.10:FF:000013">
    <property type="entry name" value="N-succinylglutamate 5-semialdehyde dehydrogenase"/>
    <property type="match status" value="1"/>
</dbReference>
<dbReference type="FunFam" id="3.40.605.10:FF:000010">
    <property type="entry name" value="N-succinylglutamate 5-semialdehyde dehydrogenase"/>
    <property type="match status" value="1"/>
</dbReference>
<dbReference type="Gene3D" id="3.40.605.10">
    <property type="entry name" value="Aldehyde Dehydrogenase, Chain A, domain 1"/>
    <property type="match status" value="1"/>
</dbReference>
<dbReference type="Gene3D" id="3.40.309.10">
    <property type="entry name" value="Aldehyde Dehydrogenase, Chain A, domain 2"/>
    <property type="match status" value="1"/>
</dbReference>
<dbReference type="HAMAP" id="MF_01174">
    <property type="entry name" value="Aldedh_AstD"/>
    <property type="match status" value="1"/>
</dbReference>
<dbReference type="InterPro" id="IPR016161">
    <property type="entry name" value="Ald_DH/histidinol_DH"/>
</dbReference>
<dbReference type="InterPro" id="IPR016163">
    <property type="entry name" value="Ald_DH_C"/>
</dbReference>
<dbReference type="InterPro" id="IPR016160">
    <property type="entry name" value="Ald_DH_CS_CYS"/>
</dbReference>
<dbReference type="InterPro" id="IPR029510">
    <property type="entry name" value="Ald_DH_CS_GLU"/>
</dbReference>
<dbReference type="InterPro" id="IPR016162">
    <property type="entry name" value="Ald_DH_N"/>
</dbReference>
<dbReference type="InterPro" id="IPR015590">
    <property type="entry name" value="Aldehyde_DH_dom"/>
</dbReference>
<dbReference type="InterPro" id="IPR017649">
    <property type="entry name" value="SuccinylGlu_semiald_DH_AstD"/>
</dbReference>
<dbReference type="NCBIfam" id="TIGR03240">
    <property type="entry name" value="arg_catab_astD"/>
    <property type="match status" value="1"/>
</dbReference>
<dbReference type="NCBIfam" id="NF006992">
    <property type="entry name" value="PRK09457.1"/>
    <property type="match status" value="1"/>
</dbReference>
<dbReference type="PANTHER" id="PTHR11699">
    <property type="entry name" value="ALDEHYDE DEHYDROGENASE-RELATED"/>
    <property type="match status" value="1"/>
</dbReference>
<dbReference type="Pfam" id="PF00171">
    <property type="entry name" value="Aldedh"/>
    <property type="match status" value="1"/>
</dbReference>
<dbReference type="SUPFAM" id="SSF53720">
    <property type="entry name" value="ALDH-like"/>
    <property type="match status" value="1"/>
</dbReference>
<dbReference type="PROSITE" id="PS00070">
    <property type="entry name" value="ALDEHYDE_DEHYDR_CYS"/>
    <property type="match status" value="1"/>
</dbReference>
<dbReference type="PROSITE" id="PS00687">
    <property type="entry name" value="ALDEHYDE_DEHYDR_GLU"/>
    <property type="match status" value="1"/>
</dbReference>
<reference key="1">
    <citation type="journal article" date="2009" name="Genome Biol.">
        <title>Genomic and genetic analyses of diversity and plant interactions of Pseudomonas fluorescens.</title>
        <authorList>
            <person name="Silby M.W."/>
            <person name="Cerdeno-Tarraga A.M."/>
            <person name="Vernikos G.S."/>
            <person name="Giddens S.R."/>
            <person name="Jackson R.W."/>
            <person name="Preston G.M."/>
            <person name="Zhang X.-X."/>
            <person name="Moon C.D."/>
            <person name="Gehrig S.M."/>
            <person name="Godfrey S.A.C."/>
            <person name="Knight C.G."/>
            <person name="Malone J.G."/>
            <person name="Robinson Z."/>
            <person name="Spiers A.J."/>
            <person name="Harris S."/>
            <person name="Challis G.L."/>
            <person name="Yaxley A.M."/>
            <person name="Harris D."/>
            <person name="Seeger K."/>
            <person name="Murphy L."/>
            <person name="Rutter S."/>
            <person name="Squares R."/>
            <person name="Quail M.A."/>
            <person name="Saunders E."/>
            <person name="Mavromatis K."/>
            <person name="Brettin T.S."/>
            <person name="Bentley S.D."/>
            <person name="Hothersall J."/>
            <person name="Stephens E."/>
            <person name="Thomas C.M."/>
            <person name="Parkhill J."/>
            <person name="Levy S.B."/>
            <person name="Rainey P.B."/>
            <person name="Thomson N.R."/>
        </authorList>
    </citation>
    <scope>NUCLEOTIDE SEQUENCE [LARGE SCALE GENOMIC DNA]</scope>
    <source>
        <strain>SBW25</strain>
    </source>
</reference>
<name>ASTD_PSEFS</name>
<keyword id="KW-0056">Arginine metabolism</keyword>
<keyword id="KW-0520">NAD</keyword>
<keyword id="KW-0560">Oxidoreductase</keyword>
<evidence type="ECO:0000255" key="1">
    <source>
        <dbReference type="HAMAP-Rule" id="MF_01174"/>
    </source>
</evidence>
<proteinExistence type="inferred from homology"/>
<organism>
    <name type="scientific">Pseudomonas fluorescens (strain SBW25)</name>
    <dbReference type="NCBI Taxonomy" id="216595"/>
    <lineage>
        <taxon>Bacteria</taxon>
        <taxon>Pseudomonadati</taxon>
        <taxon>Pseudomonadota</taxon>
        <taxon>Gammaproteobacteria</taxon>
        <taxon>Pseudomonadales</taxon>
        <taxon>Pseudomonadaceae</taxon>
        <taxon>Pseudomonas</taxon>
    </lineage>
</organism>